<keyword id="KW-0165">Cleavage on pair of basic residues</keyword>
<keyword id="KW-0204">Cytolysis</keyword>
<keyword id="KW-0472">Membrane</keyword>
<keyword id="KW-0166">Nematocyst</keyword>
<keyword id="KW-0964">Secreted</keyword>
<keyword id="KW-0732">Signal</keyword>
<keyword id="KW-1052">Target cell membrane</keyword>
<keyword id="KW-1053">Target membrane</keyword>
<keyword id="KW-0800">Toxin</keyword>
<proteinExistence type="evidence at transcript level"/>
<accession>A0A2Z5Z9X0</accession>
<reference evidence="10" key="1">
    <citation type="journal article" date="2018" name="Toxicon">
        <title>Identification of the two new, functional actinoporins, CJTOX I and CJTOX II, from the deep-sea anemone Cribrinopsis japonica.</title>
        <authorList>
            <person name="Tsutsui K."/>
            <person name="Sato T."/>
        </authorList>
    </citation>
    <scope>NUCLEOTIDE SEQUENCE [MRNA]</scope>
    <scope>FUNCTION</scope>
    <scope>RECOMBINANT EXPRESSION</scope>
</reference>
<comment type="function">
    <text evidence="4 6 9">Probably acts in predation (PubMed:29649486). Pore-forming protein that forms cations-selective hydrophilic pores of around 1 nm and causes cytolysis. Pore formation is a multi-step process that involves specific recognition of membrane sphingomyelin (but neither cholesterol nor phosphatidylcholine) using aromatic rich region and adjacent phosphocholine (POC) binding site, firm binding to the membrane (mainly driven by hydrophobic interactions) accompanied by the transfer of the N-terminal region to the lipid-water interface and finally pore formation after oligomerization of monomers (By similarity). Shows hemolytic activity on equine erythrocytes (PubMed:29649486). Hemolysis is moderately inhibited in presence of sphingomyelin, suggesting that this protein targets sphingomyelin (PubMed:29649486).</text>
</comment>
<comment type="subunit">
    <text evidence="1">Octamer or nonamer in membranes. Monomer in the soluble state.</text>
</comment>
<comment type="subcellular location">
    <subcellularLocation>
        <location evidence="9">Secreted</location>
    </subcellularLocation>
    <subcellularLocation>
        <location evidence="2">Nematocyst</location>
    </subcellularLocation>
    <subcellularLocation>
        <location evidence="9">Target cell membrane</location>
    </subcellularLocation>
    <text evidence="1">Forms an alpha-helical membrane channel in the prey.</text>
</comment>
<comment type="tissue specificity">
    <text evidence="6">Expressed in tentacles.</text>
</comment>
<comment type="domain">
    <text evidence="3">Composed of a long N-terminal alpha-helix and a core region rich in beta-sheet structures. Before the pore formation, the alpha-helix binds the lipid membrane, partitions into the lipid-water interface and stabilizes the monomeric molecule on the membrane. Finally, it traverses the bilayer, thus forming the transmembrane pore.</text>
</comment>
<comment type="similarity">
    <text evidence="8">Belongs to the actinoporin family. Sea anemone subfamily.</text>
</comment>
<feature type="signal peptide" evidence="5">
    <location>
        <begin position="1"/>
        <end position="19"/>
    </location>
</feature>
<feature type="propeptide" id="PRO_0000457358" evidence="8">
    <location>
        <begin position="20"/>
        <end position="42"/>
    </location>
</feature>
<feature type="chain" id="PRO_5016454427" description="Deep-sea actinoporin Cjtox I">
    <location>
        <begin position="43"/>
        <end position="220"/>
    </location>
</feature>
<feature type="region of interest" description="Trp-rich region, which is important for the binding to lipid membrane" evidence="3">
    <location>
        <begin position="146"/>
        <end position="161"/>
    </location>
</feature>
<feature type="short sequence motif" description="Cell attachment site, crucial for protein stability" evidence="2 5">
    <location>
        <begin position="185"/>
        <end position="187"/>
    </location>
</feature>
<feature type="binding site" evidence="2">
    <location>
        <position position="96"/>
    </location>
    <ligand>
        <name>phosphocholine</name>
        <dbReference type="ChEBI" id="CHEBI:295975"/>
    </ligand>
</feature>
<feature type="binding site" evidence="2">
    <location>
        <position position="128"/>
    </location>
    <ligand>
        <name>phosphocholine</name>
        <dbReference type="ChEBI" id="CHEBI:295975"/>
    </ligand>
</feature>
<feature type="binding site" evidence="2">
    <location>
        <position position="146"/>
    </location>
    <ligand>
        <name>phosphocholine</name>
        <dbReference type="ChEBI" id="CHEBI:295975"/>
    </ligand>
</feature>
<feature type="binding site" evidence="2">
    <location>
        <position position="148"/>
    </location>
    <ligand>
        <name>phosphocholine</name>
        <dbReference type="ChEBI" id="CHEBI:295975"/>
    </ligand>
</feature>
<feature type="binding site" evidence="2">
    <location>
        <position position="174"/>
    </location>
    <ligand>
        <name>phosphocholine</name>
        <dbReference type="ChEBI" id="CHEBI:295975"/>
    </ligand>
</feature>
<feature type="binding site" evidence="2">
    <location>
        <position position="178"/>
    </location>
    <ligand>
        <name>phosphocholine</name>
        <dbReference type="ChEBI" id="CHEBI:295975"/>
    </ligand>
</feature>
<feature type="binding site" evidence="2">
    <location>
        <position position="179"/>
    </location>
    <ligand>
        <name>phosphocholine</name>
        <dbReference type="ChEBI" id="CHEBI:295975"/>
    </ligand>
</feature>
<feature type="site" description="Important in the initial contact with the lipid membrane" evidence="3">
    <location>
        <position position="154"/>
    </location>
</feature>
<feature type="site" description="Interacts with the lipid membrane" evidence="3">
    <location>
        <position position="201"/>
    </location>
</feature>
<feature type="sequence variant" evidence="6">
    <original>E</original>
    <variation>D</variation>
    <location>
        <position position="29"/>
    </location>
</feature>
<feature type="sequence variant" evidence="6">
    <original>EK</original>
    <variation>KE</variation>
    <location>
        <begin position="37"/>
        <end position="38"/>
    </location>
</feature>
<feature type="sequence variant" evidence="6">
    <original>V</original>
    <variation>L</variation>
    <location>
        <position position="46"/>
    </location>
</feature>
<feature type="sequence variant" evidence="6">
    <original>M</original>
    <variation>R</variation>
    <location>
        <position position="85"/>
    </location>
</feature>
<feature type="sequence variant" evidence="6">
    <original>D</original>
    <variation>H</variation>
    <location>
        <position position="150"/>
    </location>
</feature>
<feature type="sequence variant" evidence="6">
    <original>N</original>
    <variation>T</variation>
    <location>
        <position position="152"/>
    </location>
</feature>
<feature type="sequence variant" evidence="6">
    <original>S</original>
    <variation>R</variation>
    <location>
        <position position="155"/>
    </location>
</feature>
<feature type="sequence variant" evidence="6">
    <original>R</original>
    <variation>G</variation>
    <location>
        <position position="164"/>
    </location>
</feature>
<feature type="sequence variant" evidence="6">
    <original>W</original>
    <variation>Q</variation>
    <location>
        <position position="172"/>
    </location>
</feature>
<feature type="sequence variant" evidence="6">
    <original>H</original>
    <variation>R</variation>
    <location>
        <position position="175"/>
    </location>
</feature>
<feature type="sequence variant" evidence="6">
    <original>Y</original>
    <variation>H</variation>
    <location>
        <position position="180"/>
    </location>
</feature>
<feature type="sequence variant" evidence="6">
    <original>RP</original>
    <variation>KL</variation>
    <location>
        <begin position="182"/>
        <end position="183"/>
    </location>
</feature>
<feature type="sequence variant" evidence="6">
    <original>R</original>
    <variation>K</variation>
    <location>
        <position position="182"/>
    </location>
</feature>
<feature type="sequence variant" evidence="6">
    <original>R</original>
    <variation>S</variation>
    <location>
        <position position="182"/>
    </location>
</feature>
<feature type="sequence variant" evidence="6">
    <original>E</original>
    <variation>S</variation>
    <location>
        <position position="192"/>
    </location>
</feature>
<feature type="sequence variant" evidence="6">
    <original>S</original>
    <variation>H</variation>
    <location>
        <position position="194"/>
    </location>
</feature>
<feature type="sequence variant" evidence="6">
    <original>S</original>
    <variation>Y</variation>
    <location>
        <position position="194"/>
    </location>
</feature>
<feature type="sequence variant" evidence="6">
    <original>K</original>
    <variation>W</variation>
    <location>
        <position position="200"/>
    </location>
</feature>
<feature type="sequence variant" evidence="6">
    <original>K</original>
    <variation>R</variation>
    <location>
        <position position="202"/>
    </location>
</feature>
<feature type="sequence variant" evidence="6">
    <original>T</original>
    <variation>A</variation>
    <location>
        <position position="206"/>
    </location>
</feature>
<feature type="sequence variant" evidence="6">
    <original>L</original>
    <variation>S</variation>
    <location>
        <position position="213"/>
    </location>
</feature>
<feature type="sequence variant" evidence="6">
    <original>S</original>
    <variation>Y</variation>
    <location>
        <position position="218"/>
    </location>
</feature>
<feature type="sequence variant" evidence="6">
    <original>A</original>
    <variation>T</variation>
    <location>
        <position position="220"/>
    </location>
</feature>
<dbReference type="EMBL" id="LC350098">
    <property type="protein sequence ID" value="BBC77264.1"/>
    <property type="molecule type" value="mRNA"/>
</dbReference>
<dbReference type="SMR" id="A0A2Z5Z9X0"/>
<dbReference type="GO" id="GO:0005576">
    <property type="term" value="C:extracellular region"/>
    <property type="evidence" value="ECO:0007669"/>
    <property type="project" value="UniProtKB-SubCell"/>
</dbReference>
<dbReference type="GO" id="GO:0042151">
    <property type="term" value="C:nematocyst"/>
    <property type="evidence" value="ECO:0007669"/>
    <property type="project" value="UniProtKB-SubCell"/>
</dbReference>
<dbReference type="GO" id="GO:0044218">
    <property type="term" value="C:other organism cell membrane"/>
    <property type="evidence" value="ECO:0007669"/>
    <property type="project" value="UniProtKB-KW"/>
</dbReference>
<dbReference type="GO" id="GO:0046930">
    <property type="term" value="C:pore complex"/>
    <property type="evidence" value="ECO:0007669"/>
    <property type="project" value="InterPro"/>
</dbReference>
<dbReference type="GO" id="GO:0015267">
    <property type="term" value="F:channel activity"/>
    <property type="evidence" value="ECO:0007669"/>
    <property type="project" value="InterPro"/>
</dbReference>
<dbReference type="GO" id="GO:0090729">
    <property type="term" value="F:toxin activity"/>
    <property type="evidence" value="ECO:0007669"/>
    <property type="project" value="UniProtKB-KW"/>
</dbReference>
<dbReference type="GO" id="GO:0051715">
    <property type="term" value="P:cytolysis in another organism"/>
    <property type="evidence" value="ECO:0007669"/>
    <property type="project" value="InterPro"/>
</dbReference>
<dbReference type="GO" id="GO:0006812">
    <property type="term" value="P:monoatomic cation transport"/>
    <property type="evidence" value="ECO:0007669"/>
    <property type="project" value="InterPro"/>
</dbReference>
<dbReference type="GO" id="GO:0046931">
    <property type="term" value="P:pore complex assembly"/>
    <property type="evidence" value="ECO:0007669"/>
    <property type="project" value="InterPro"/>
</dbReference>
<dbReference type="FunFam" id="2.60.270.20:FF:000001">
    <property type="entry name" value="DELTA-actitoxin-Afr1a"/>
    <property type="match status" value="1"/>
</dbReference>
<dbReference type="Gene3D" id="2.60.270.20">
    <property type="entry name" value="Cytolysin/lectin"/>
    <property type="match status" value="1"/>
</dbReference>
<dbReference type="InterPro" id="IPR050677">
    <property type="entry name" value="Actinoporin_PFT"/>
</dbReference>
<dbReference type="InterPro" id="IPR009104">
    <property type="entry name" value="Anemon_actinoporin-like"/>
</dbReference>
<dbReference type="InterPro" id="IPR015926">
    <property type="entry name" value="Cytolysin/lectin"/>
</dbReference>
<dbReference type="PANTHER" id="PTHR40388">
    <property type="entry name" value="BRYOPORIN"/>
    <property type="match status" value="1"/>
</dbReference>
<dbReference type="PANTHER" id="PTHR40388:SF1">
    <property type="entry name" value="BRYOPORIN"/>
    <property type="match status" value="1"/>
</dbReference>
<dbReference type="Pfam" id="PF06369">
    <property type="entry name" value="Anemone_cytotox"/>
    <property type="match status" value="1"/>
</dbReference>
<dbReference type="SUPFAM" id="SSF63724">
    <property type="entry name" value="Cytolysin/lectin"/>
    <property type="match status" value="1"/>
</dbReference>
<sequence>MNRLIILCLVAATIYSTIALPMKEDISNEERPTSVNEKPVKKSVAVAGAVIQGAALAFQVLDKILTSLGGIGRKIAIGVDNESGMKWAARNVYFYSGTSDTVLPYSVPHSKAFLYGARKTRGSVRGAVGVLAYSMSDGNTLGILFSVPYDYNWYSNWWNIKVYRGYKRANKWMYHDLYYYARPHKGNNEWHEKSLGYGLKSKGFMTSSGQTKLEIRVSRA</sequence>
<name>ACT1_CRIJA</name>
<protein>
    <recommendedName>
        <fullName evidence="7">Deep-sea actinoporin Cjtox I</fullName>
    </recommendedName>
    <alternativeName>
        <fullName evidence="8">DELTA-actitoxin-Cja1a</fullName>
        <shortName evidence="8">DELTA-AITX-Cja1a</shortName>
    </alternativeName>
</protein>
<organism>
    <name type="scientific">Cribrinopsis japonica</name>
    <name type="common">Deep-sea anemone</name>
    <dbReference type="NCBI Taxonomy" id="1799150"/>
    <lineage>
        <taxon>Eukaryota</taxon>
        <taxon>Metazoa</taxon>
        <taxon>Cnidaria</taxon>
        <taxon>Anthozoa</taxon>
        <taxon>Hexacorallia</taxon>
        <taxon>Actiniaria</taxon>
        <taxon>Actiniidae</taxon>
        <taxon>Cribrinopsis</taxon>
    </lineage>
</organism>
<evidence type="ECO:0000250" key="1">
    <source>
        <dbReference type="UniProtKB" id="B9W5G6"/>
    </source>
</evidence>
<evidence type="ECO:0000250" key="2">
    <source>
        <dbReference type="UniProtKB" id="P07845"/>
    </source>
</evidence>
<evidence type="ECO:0000250" key="3">
    <source>
        <dbReference type="UniProtKB" id="P61914"/>
    </source>
</evidence>
<evidence type="ECO:0000250" key="4">
    <source>
        <dbReference type="UniProtKB" id="Q86FQ0"/>
    </source>
</evidence>
<evidence type="ECO:0000255" key="5"/>
<evidence type="ECO:0000269" key="6">
    <source>
    </source>
</evidence>
<evidence type="ECO:0000303" key="7">
    <source>
    </source>
</evidence>
<evidence type="ECO:0000305" key="8"/>
<evidence type="ECO:0000305" key="9">
    <source>
    </source>
</evidence>
<evidence type="ECO:0000312" key="10">
    <source>
        <dbReference type="EMBL" id="BBC77264.1"/>
    </source>
</evidence>